<gene>
    <name type="primary">LSM3</name>
    <name type="synonym">SMX4</name>
    <name type="synonym">USS2</name>
    <name type="ordered locus">YLR438C-A</name>
</gene>
<evidence type="ECO:0000255" key="1">
    <source>
        <dbReference type="PROSITE-ProRule" id="PRU01346"/>
    </source>
</evidence>
<evidence type="ECO:0000269" key="2">
    <source>
    </source>
</evidence>
<evidence type="ECO:0000269" key="3">
    <source>
    </source>
</evidence>
<evidence type="ECO:0000269" key="4">
    <source>
    </source>
</evidence>
<evidence type="ECO:0000269" key="5">
    <source>
    </source>
</evidence>
<evidence type="ECO:0000269" key="6">
    <source>
    </source>
</evidence>
<evidence type="ECO:0000269" key="7">
    <source>
    </source>
</evidence>
<evidence type="ECO:0000269" key="8">
    <source>
    </source>
</evidence>
<evidence type="ECO:0000269" key="9">
    <source>
    </source>
</evidence>
<evidence type="ECO:0000269" key="10">
    <source>
    </source>
</evidence>
<evidence type="ECO:0000269" key="11">
    <source>
    </source>
</evidence>
<evidence type="ECO:0000269" key="12">
    <source>
    </source>
</evidence>
<evidence type="ECO:0000269" key="13">
    <source>
    </source>
</evidence>
<evidence type="ECO:0000269" key="14">
    <source>
    </source>
</evidence>
<evidence type="ECO:0000269" key="15">
    <source>
    </source>
</evidence>
<evidence type="ECO:0000269" key="16">
    <source>
    </source>
</evidence>
<evidence type="ECO:0000269" key="17">
    <source>
    </source>
</evidence>
<evidence type="ECO:0000269" key="18">
    <source>
    </source>
</evidence>
<evidence type="ECO:0000269" key="19">
    <source>
    </source>
</evidence>
<evidence type="ECO:0000305" key="20"/>
<evidence type="ECO:0000305" key="21">
    <source>
    </source>
</evidence>
<evidence type="ECO:0007744" key="22">
    <source>
        <dbReference type="PDB" id="5VSU"/>
    </source>
</evidence>
<evidence type="ECO:0007744" key="23">
    <source>
        <dbReference type="PDB" id="6ASO"/>
    </source>
</evidence>
<evidence type="ECO:0007829" key="24">
    <source>
        <dbReference type="PDB" id="4C92"/>
    </source>
</evidence>
<feature type="chain" id="PRO_0000125563" description="LSM complex subunit LSM3">
    <location>
        <begin position="1"/>
        <end position="89"/>
    </location>
</feature>
<feature type="domain" description="Sm" evidence="1">
    <location>
        <begin position="3"/>
        <end position="82"/>
    </location>
</feature>
<feature type="mutagenesis site" description="Sensitive to thermal stress. Decreases binding affinity for U6 snRNA." evidence="17">
    <original>R</original>
    <variation>E</variation>
    <location>
        <position position="21"/>
    </location>
</feature>
<feature type="mutagenesis site" description="Strongly reduces affinity for poly-U RNA ends." evidence="14">
    <original>H</original>
    <variation>A</variation>
    <location>
        <position position="36"/>
    </location>
</feature>
<feature type="mutagenesis site" description="Strongly reduces affinity for poly-U RNA ends." evidence="14">
    <original>N</original>
    <variation>A</variation>
    <location>
        <position position="38"/>
    </location>
</feature>
<feature type="mutagenesis site" description="Strongly reduces affinity for poly-U RNA ends." evidence="14 16">
    <original>R</original>
    <variation>A</variation>
    <location>
        <position position="69"/>
    </location>
</feature>
<feature type="helix" evidence="24">
    <location>
        <begin position="4"/>
        <end position="9"/>
    </location>
</feature>
<feature type="turn" evidence="24">
    <location>
        <begin position="10"/>
        <end position="13"/>
    </location>
</feature>
<feature type="strand" evidence="24">
    <location>
        <begin position="14"/>
        <end position="20"/>
    </location>
</feature>
<feature type="turn" evidence="24">
    <location>
        <begin position="21"/>
        <end position="23"/>
    </location>
</feature>
<feature type="strand" evidence="24">
    <location>
        <begin position="24"/>
        <end position="33"/>
    </location>
</feature>
<feature type="strand" evidence="24">
    <location>
        <begin position="39"/>
        <end position="52"/>
    </location>
</feature>
<feature type="strand" evidence="24">
    <location>
        <begin position="55"/>
        <end position="68"/>
    </location>
</feature>
<feature type="helix" evidence="24">
    <location>
        <begin position="70"/>
        <end position="72"/>
    </location>
</feature>
<feature type="strand" evidence="24">
    <location>
        <begin position="73"/>
        <end position="77"/>
    </location>
</feature>
<keyword id="KW-0002">3D-structure</keyword>
<keyword id="KW-0963">Cytoplasm</keyword>
<keyword id="KW-0507">mRNA processing</keyword>
<keyword id="KW-0508">mRNA splicing</keyword>
<keyword id="KW-0539">Nucleus</keyword>
<keyword id="KW-1185">Reference proteome</keyword>
<keyword id="KW-0687">Ribonucleoprotein</keyword>
<keyword id="KW-0694">RNA-binding</keyword>
<keyword id="KW-0698">rRNA processing</keyword>
<keyword id="KW-0747">Spliceosome</keyword>
<keyword id="KW-0819">tRNA processing</keyword>
<dbReference type="EMBL" id="Z30582">
    <property type="protein sequence ID" value="CAA83056.1"/>
    <property type="molecule type" value="Genomic_DNA"/>
</dbReference>
<dbReference type="EMBL" id="X06790">
    <property type="protein sequence ID" value="CAA29948.1"/>
    <property type="molecule type" value="Genomic_DNA"/>
</dbReference>
<dbReference type="EMBL" id="U21094">
    <property type="status" value="NOT_ANNOTATED_CDS"/>
    <property type="molecule type" value="Genomic_DNA"/>
</dbReference>
<dbReference type="EMBL" id="BK006945">
    <property type="protein sequence ID" value="DAA09739.1"/>
    <property type="molecule type" value="Genomic_DNA"/>
</dbReference>
<dbReference type="PIR" id="S78568">
    <property type="entry name" value="S78568"/>
</dbReference>
<dbReference type="RefSeq" id="NP_013543.3">
    <property type="nucleotide sequence ID" value="NM_001184308.3"/>
</dbReference>
<dbReference type="PDB" id="3BW1">
    <property type="method" value="X-ray"/>
    <property type="resolution" value="2.50 A"/>
    <property type="chains" value="A/B=1-89"/>
</dbReference>
<dbReference type="PDB" id="3JCM">
    <property type="method" value="EM"/>
    <property type="resolution" value="3.80 A"/>
    <property type="chains" value="d=1-89"/>
</dbReference>
<dbReference type="PDB" id="4C8Q">
    <property type="method" value="X-ray"/>
    <property type="resolution" value="3.70 A"/>
    <property type="chains" value="C=1-89"/>
</dbReference>
<dbReference type="PDB" id="4C92">
    <property type="method" value="X-ray"/>
    <property type="resolution" value="2.30 A"/>
    <property type="chains" value="C=1-89"/>
</dbReference>
<dbReference type="PDB" id="4M75">
    <property type="method" value="X-ray"/>
    <property type="resolution" value="2.95 A"/>
    <property type="chains" value="C/J=1-89"/>
</dbReference>
<dbReference type="PDB" id="4M77">
    <property type="method" value="X-ray"/>
    <property type="resolution" value="3.11 A"/>
    <property type="chains" value="C/J=1-89"/>
</dbReference>
<dbReference type="PDB" id="4M78">
    <property type="method" value="X-ray"/>
    <property type="resolution" value="2.79 A"/>
    <property type="chains" value="C/J=1-89"/>
</dbReference>
<dbReference type="PDB" id="4M7A">
    <property type="method" value="X-ray"/>
    <property type="resolution" value="2.78 A"/>
    <property type="chains" value="C/J=1-89"/>
</dbReference>
<dbReference type="PDB" id="4M7D">
    <property type="method" value="X-ray"/>
    <property type="resolution" value="2.60 A"/>
    <property type="chains" value="C/J=1-89"/>
</dbReference>
<dbReference type="PDB" id="4N0A">
    <property type="method" value="X-ray"/>
    <property type="resolution" value="3.15 A"/>
    <property type="chains" value="A/B/E/F=1-89"/>
</dbReference>
<dbReference type="PDB" id="5GAN">
    <property type="method" value="EM"/>
    <property type="resolution" value="3.60 A"/>
    <property type="chains" value="3=1-89"/>
</dbReference>
<dbReference type="PDB" id="5NRL">
    <property type="method" value="EM"/>
    <property type="resolution" value="7.20 A"/>
    <property type="chains" value="3=1-89"/>
</dbReference>
<dbReference type="PDB" id="5VSU">
    <property type="method" value="X-ray"/>
    <property type="resolution" value="3.10 A"/>
    <property type="chains" value="C=1-89"/>
</dbReference>
<dbReference type="PDB" id="5ZWM">
    <property type="method" value="EM"/>
    <property type="resolution" value="3.40 A"/>
    <property type="chains" value="r=1-89"/>
</dbReference>
<dbReference type="PDB" id="5ZWO">
    <property type="method" value="EM"/>
    <property type="resolution" value="3.90 A"/>
    <property type="chains" value="r=1-89"/>
</dbReference>
<dbReference type="PDB" id="6ASO">
    <property type="method" value="X-ray"/>
    <property type="resolution" value="2.71 A"/>
    <property type="chains" value="C=1-89"/>
</dbReference>
<dbReference type="PDBsum" id="3BW1"/>
<dbReference type="PDBsum" id="3JCM"/>
<dbReference type="PDBsum" id="4C8Q"/>
<dbReference type="PDBsum" id="4C92"/>
<dbReference type="PDBsum" id="4M75"/>
<dbReference type="PDBsum" id="4M77"/>
<dbReference type="PDBsum" id="4M78"/>
<dbReference type="PDBsum" id="4M7A"/>
<dbReference type="PDBsum" id="4M7D"/>
<dbReference type="PDBsum" id="4N0A"/>
<dbReference type="PDBsum" id="5GAN"/>
<dbReference type="PDBsum" id="5NRL"/>
<dbReference type="PDBsum" id="5VSU"/>
<dbReference type="PDBsum" id="5ZWM"/>
<dbReference type="PDBsum" id="5ZWO"/>
<dbReference type="PDBsum" id="6ASO"/>
<dbReference type="EMDB" id="EMD-3683"/>
<dbReference type="EMDB" id="EMD-6972"/>
<dbReference type="EMDB" id="EMD-6974"/>
<dbReference type="EMDB" id="EMD-8012"/>
<dbReference type="SMR" id="P57743"/>
<dbReference type="BioGRID" id="31697">
    <property type="interactions" value="401"/>
</dbReference>
<dbReference type="ComplexPortal" id="CPX-112">
    <property type="entry name" value="LSM1-7-PAT1 complex"/>
</dbReference>
<dbReference type="ComplexPortal" id="CPX-24">
    <property type="entry name" value="U6 small nuclear ribonucleoprotein complex"/>
</dbReference>
<dbReference type="ComplexPortal" id="CPX-25">
    <property type="entry name" value="U4/U6.U5 tri-small nuclear ribonucleoprotein complex"/>
</dbReference>
<dbReference type="ComplexPortal" id="CPX-32">
    <property type="entry name" value="U4/U6 small nuclear ribonucleoprotein complex"/>
</dbReference>
<dbReference type="ComplexPortal" id="CPX-44">
    <property type="entry name" value="LSM2-8 complex"/>
</dbReference>
<dbReference type="ComplexPortal" id="CPX-45">
    <property type="entry name" value="LSM1-7 complex"/>
</dbReference>
<dbReference type="ComplexPortal" id="CPX-46">
    <property type="entry name" value="LSM2-7 complex"/>
</dbReference>
<dbReference type="DIP" id="DIP-2587N"/>
<dbReference type="FunCoup" id="P57743">
    <property type="interactions" value="732"/>
</dbReference>
<dbReference type="IntAct" id="P57743">
    <property type="interactions" value="99"/>
</dbReference>
<dbReference type="MINT" id="P57743"/>
<dbReference type="STRING" id="4932.YLR438C-A"/>
<dbReference type="iPTMnet" id="P57743"/>
<dbReference type="PaxDb" id="4932-YLR438C-A"/>
<dbReference type="PeptideAtlas" id="P57743"/>
<dbReference type="EnsemblFungi" id="YLR438C-A_mRNA">
    <property type="protein sequence ID" value="YLR438C-A"/>
    <property type="gene ID" value="YLR438C-A"/>
</dbReference>
<dbReference type="GeneID" id="851159"/>
<dbReference type="KEGG" id="sce:YLR438C-A"/>
<dbReference type="AGR" id="SGD:S000006434"/>
<dbReference type="SGD" id="S000006434">
    <property type="gene designation" value="LSM3"/>
</dbReference>
<dbReference type="VEuPathDB" id="FungiDB:YLR438C-A"/>
<dbReference type="eggNOG" id="KOG3460">
    <property type="taxonomic scope" value="Eukaryota"/>
</dbReference>
<dbReference type="HOGENOM" id="CLU_076902_5_1_1"/>
<dbReference type="InParanoid" id="P57743"/>
<dbReference type="OMA" id="FDSHCNI"/>
<dbReference type="OrthoDB" id="29543at2759"/>
<dbReference type="BioCyc" id="YEAST:G3O-32519-MONOMER"/>
<dbReference type="Reactome" id="R-SCE-430039">
    <property type="pathway name" value="mRNA decay by 5' to 3' exoribonuclease"/>
</dbReference>
<dbReference type="BioGRID-ORCS" id="851159">
    <property type="hits" value="6 hits in 10 CRISPR screens"/>
</dbReference>
<dbReference type="CD-CODE" id="A777E0F8">
    <property type="entry name" value="P-body"/>
</dbReference>
<dbReference type="CD-CODE" id="E03F929F">
    <property type="entry name" value="Stress granule"/>
</dbReference>
<dbReference type="EvolutionaryTrace" id="P57743"/>
<dbReference type="PRO" id="PR:P57743"/>
<dbReference type="Proteomes" id="UP000002311">
    <property type="component" value="Chromosome XII"/>
</dbReference>
<dbReference type="RNAct" id="P57743">
    <property type="molecule type" value="protein"/>
</dbReference>
<dbReference type="GO" id="GO:0071013">
    <property type="term" value="C:catalytic step 2 spliceosome"/>
    <property type="evidence" value="ECO:0000318"/>
    <property type="project" value="GO_Central"/>
</dbReference>
<dbReference type="GO" id="GO:0005737">
    <property type="term" value="C:cytoplasm"/>
    <property type="evidence" value="ECO:0007005"/>
    <property type="project" value="SGD"/>
</dbReference>
<dbReference type="GO" id="GO:1990726">
    <property type="term" value="C:Lsm1-7-Pat1 complex"/>
    <property type="evidence" value="ECO:0000314"/>
    <property type="project" value="SGD"/>
</dbReference>
<dbReference type="GO" id="GO:0005730">
    <property type="term" value="C:nucleolus"/>
    <property type="evidence" value="ECO:0000314"/>
    <property type="project" value="ComplexPortal"/>
</dbReference>
<dbReference type="GO" id="GO:0005634">
    <property type="term" value="C:nucleus"/>
    <property type="evidence" value="ECO:0000314"/>
    <property type="project" value="ComplexPortal"/>
</dbReference>
<dbReference type="GO" id="GO:0000932">
    <property type="term" value="C:P-body"/>
    <property type="evidence" value="ECO:0000314"/>
    <property type="project" value="ComplexPortal"/>
</dbReference>
<dbReference type="GO" id="GO:0071011">
    <property type="term" value="C:precatalytic spliceosome"/>
    <property type="evidence" value="ECO:0000318"/>
    <property type="project" value="GO_Central"/>
</dbReference>
<dbReference type="GO" id="GO:0005732">
    <property type="term" value="C:sno(s)RNA-containing ribonucleoprotein complex"/>
    <property type="evidence" value="ECO:0000353"/>
    <property type="project" value="SGD"/>
</dbReference>
<dbReference type="GO" id="GO:0005681">
    <property type="term" value="C:spliceosomal complex"/>
    <property type="evidence" value="ECO:0000303"/>
    <property type="project" value="ComplexPortal"/>
</dbReference>
<dbReference type="GO" id="GO:0071001">
    <property type="term" value="C:U4/U6 snRNP"/>
    <property type="evidence" value="ECO:0000303"/>
    <property type="project" value="ComplexPortal"/>
</dbReference>
<dbReference type="GO" id="GO:0046540">
    <property type="term" value="C:U4/U6 x U5 tri-snRNP complex"/>
    <property type="evidence" value="ECO:0000314"/>
    <property type="project" value="SGD"/>
</dbReference>
<dbReference type="GO" id="GO:0005688">
    <property type="term" value="C:U6 snRNP"/>
    <property type="evidence" value="ECO:0000314"/>
    <property type="project" value="ComplexPortal"/>
</dbReference>
<dbReference type="GO" id="GO:0003723">
    <property type="term" value="F:RNA binding"/>
    <property type="evidence" value="ECO:0007669"/>
    <property type="project" value="UniProtKB-KW"/>
</dbReference>
<dbReference type="GO" id="GO:0000290">
    <property type="term" value="P:deadenylation-dependent decapping of nuclear-transcribed mRNA"/>
    <property type="evidence" value="ECO:0000315"/>
    <property type="project" value="ComplexPortal"/>
</dbReference>
<dbReference type="GO" id="GO:0000398">
    <property type="term" value="P:mRNA splicing, via spliceosome"/>
    <property type="evidence" value="ECO:0000315"/>
    <property type="project" value="SGD"/>
</dbReference>
<dbReference type="GO" id="GO:0033962">
    <property type="term" value="P:P-body assembly"/>
    <property type="evidence" value="ECO:0000318"/>
    <property type="project" value="GO_Central"/>
</dbReference>
<dbReference type="GO" id="GO:0006364">
    <property type="term" value="P:rRNA processing"/>
    <property type="evidence" value="ECO:0000315"/>
    <property type="project" value="ComplexPortal"/>
</dbReference>
<dbReference type="GO" id="GO:0008033">
    <property type="term" value="P:tRNA processing"/>
    <property type="evidence" value="ECO:0000315"/>
    <property type="project" value="ComplexPortal"/>
</dbReference>
<dbReference type="CDD" id="cd01730">
    <property type="entry name" value="LSm3"/>
    <property type="match status" value="1"/>
</dbReference>
<dbReference type="FunFam" id="2.30.30.100:FF:000063">
    <property type="entry name" value="U6 snRNA-associated Sm-like protein LSm3"/>
    <property type="match status" value="1"/>
</dbReference>
<dbReference type="Gene3D" id="2.30.30.100">
    <property type="match status" value="1"/>
</dbReference>
<dbReference type="InterPro" id="IPR034105">
    <property type="entry name" value="Lsm3"/>
</dbReference>
<dbReference type="InterPro" id="IPR010920">
    <property type="entry name" value="LSM_dom_sf"/>
</dbReference>
<dbReference type="InterPro" id="IPR047575">
    <property type="entry name" value="Sm"/>
</dbReference>
<dbReference type="InterPro" id="IPR040002">
    <property type="entry name" value="Sm-like_LSM3"/>
</dbReference>
<dbReference type="InterPro" id="IPR001163">
    <property type="entry name" value="Sm_dom_euk/arc"/>
</dbReference>
<dbReference type="PANTHER" id="PTHR13110">
    <property type="entry name" value="U6 SNRNA-ASSOCIATED SM-LIKE PROTEIN LSM3"/>
    <property type="match status" value="1"/>
</dbReference>
<dbReference type="Pfam" id="PF01423">
    <property type="entry name" value="LSM"/>
    <property type="match status" value="1"/>
</dbReference>
<dbReference type="SMART" id="SM00651">
    <property type="entry name" value="Sm"/>
    <property type="match status" value="1"/>
</dbReference>
<dbReference type="SUPFAM" id="SSF50182">
    <property type="entry name" value="Sm-like ribonucleoproteins"/>
    <property type="match status" value="1"/>
</dbReference>
<dbReference type="PROSITE" id="PS52002">
    <property type="entry name" value="SM"/>
    <property type="match status" value="1"/>
</dbReference>
<accession>P57743</accession>
<accession>D6VZ73</accession>
<accession>Q05176</accession>
<accession>Q06759</accession>
<reference key="1">
    <citation type="journal article" date="1995" name="EMBO J.">
        <title>Sm and Sm-like proteins belong to a large family: identification of proteins of the U6 as well as the U1, U2, U4 and U5 snRNPs.</title>
        <authorList>
            <person name="Seraphin B."/>
        </authorList>
    </citation>
    <scope>NUCLEOTIDE SEQUENCE [GENOMIC DNA]</scope>
    <scope>IDENTIFICATION</scope>
    <scope>FUNCTION</scope>
</reference>
<reference key="2">
    <citation type="journal article" date="1997" name="Nature">
        <title>The nucleotide sequence of Saccharomyces cerevisiae chromosome XII.</title>
        <authorList>
            <person name="Johnston M."/>
            <person name="Hillier L.W."/>
            <person name="Riles L."/>
            <person name="Albermann K."/>
            <person name="Andre B."/>
            <person name="Ansorge W."/>
            <person name="Benes V."/>
            <person name="Brueckner M."/>
            <person name="Delius H."/>
            <person name="Dubois E."/>
            <person name="Duesterhoeft A."/>
            <person name="Entian K.-D."/>
            <person name="Floeth M."/>
            <person name="Goffeau A."/>
            <person name="Hebling U."/>
            <person name="Heumann K."/>
            <person name="Heuss-Neitzel D."/>
            <person name="Hilbert H."/>
            <person name="Hilger F."/>
            <person name="Kleine K."/>
            <person name="Koetter P."/>
            <person name="Louis E.J."/>
            <person name="Messenguy F."/>
            <person name="Mewes H.-W."/>
            <person name="Miosga T."/>
            <person name="Moestl D."/>
            <person name="Mueller-Auer S."/>
            <person name="Nentwich U."/>
            <person name="Obermaier B."/>
            <person name="Piravandi E."/>
            <person name="Pohl T.M."/>
            <person name="Portetelle D."/>
            <person name="Purnelle B."/>
            <person name="Rechmann S."/>
            <person name="Rieger M."/>
            <person name="Rinke M."/>
            <person name="Rose M."/>
            <person name="Scharfe M."/>
            <person name="Scherens B."/>
            <person name="Scholler P."/>
            <person name="Schwager C."/>
            <person name="Schwarz S."/>
            <person name="Underwood A.P."/>
            <person name="Urrestarazu L.A."/>
            <person name="Vandenbol M."/>
            <person name="Verhasselt P."/>
            <person name="Vierendeels F."/>
            <person name="Voet M."/>
            <person name="Volckaert G."/>
            <person name="Voss H."/>
            <person name="Wambutt R."/>
            <person name="Wedler E."/>
            <person name="Wedler H."/>
            <person name="Zimmermann F.K."/>
            <person name="Zollner A."/>
            <person name="Hani J."/>
            <person name="Hoheisel J.D."/>
        </authorList>
    </citation>
    <scope>NUCLEOTIDE SEQUENCE [LARGE SCALE GENOMIC DNA]</scope>
    <source>
        <strain>ATCC 204508 / S288c</strain>
    </source>
</reference>
<reference key="3">
    <citation type="journal article" date="2014" name="G3 (Bethesda)">
        <title>The reference genome sequence of Saccharomyces cerevisiae: Then and now.</title>
        <authorList>
            <person name="Engel S.R."/>
            <person name="Dietrich F.S."/>
            <person name="Fisk D.G."/>
            <person name="Binkley G."/>
            <person name="Balakrishnan R."/>
            <person name="Costanzo M.C."/>
            <person name="Dwight S.S."/>
            <person name="Hitz B.C."/>
            <person name="Karra K."/>
            <person name="Nash R.S."/>
            <person name="Weng S."/>
            <person name="Wong E.D."/>
            <person name="Lloyd P."/>
            <person name="Skrzypek M.S."/>
            <person name="Miyasato S.R."/>
            <person name="Simison M."/>
            <person name="Cherry J.M."/>
        </authorList>
    </citation>
    <scope>GENOME REANNOTATION</scope>
    <source>
        <strain>ATCC 204508 / S288c</strain>
    </source>
</reference>
<reference key="4">
    <citation type="journal article" date="1995" name="Gene">
        <title>Gene MRP-L4, encoding mitochondrial ribosomal protein YmL4, is indispensable for proper non-respiratory cell functions in yeast.</title>
        <authorList>
            <person name="Graack H.-R."/>
            <person name="Grohmann L."/>
            <person name="Kitakawa M."/>
            <person name="Goldschmidt-Reisin S."/>
        </authorList>
    </citation>
    <scope>NUCLEOTIDE SEQUENCE [GENOMIC DNA] OF 1-33</scope>
    <source>
        <strain>07173</strain>
    </source>
</reference>
<reference key="5">
    <citation type="journal article" date="1987" name="Eur. J. Biochem.">
        <title>Functional analysis of the regulatory region adjacent to the cargB gene of Saccharomyces cerevisiae. Nucleotide sequence, gene fusion experiments and cis-dominant regulatory mutation analysis.</title>
        <authorList>
            <person name="Degols G."/>
        </authorList>
    </citation>
    <scope>NUCLEOTIDE SEQUENCE [GENOMIC DNA] OF 34-89</scope>
</reference>
<reference key="6">
    <citation type="journal article" date="1999" name="EMBO J.">
        <title>Sm and Sm-like proteins assemble in two related complexes of deep evolutionary origin.</title>
        <authorList>
            <person name="Salgado-Garrido J."/>
            <person name="Bragado-Nilsson E."/>
            <person name="Kandels-Lewis S."/>
            <person name="Seraphin B."/>
        </authorList>
    </citation>
    <scope>FUNCTION</scope>
    <scope>IDENTIFICATION IN THE LSM2-LSM8 COMPLEX</scope>
    <scope>ASSOCIATION WITH PRE-P RNA</scope>
</reference>
<reference key="7">
    <citation type="journal article" date="1999" name="EMBO J.">
        <title>Characterization of Sm-like proteins in yeast and their association with U6 snRNA.</title>
        <authorList>
            <person name="Mayes A.E."/>
            <person name="Verdone L."/>
            <person name="Legrain P."/>
            <person name="Beggs J.D."/>
        </authorList>
    </citation>
    <scope>IDENTIFICATION</scope>
    <scope>CHARACTERIZATION</scope>
</reference>
<reference key="8">
    <citation type="journal article" date="1999" name="EMBO J.">
        <title>Identification by mass spectrometry and functional analysis of novel proteins of the yeast [U4/U6.U5] tri-snRNP.</title>
        <authorList>
            <person name="Gottschalk A."/>
            <person name="Neubauer G."/>
            <person name="Banroques J."/>
            <person name="Mann M."/>
            <person name="Luehrmann R."/>
            <person name="Fabrizio P."/>
        </authorList>
    </citation>
    <scope>SUBUNIT</scope>
    <scope>IDENTIFICATION IN THE U4/U5/U6 TRI-SNRNP COMPLEX</scope>
    <scope>IDENTIFICATION BY MASS SPECTROMETRY</scope>
</reference>
<reference key="9">
    <citation type="journal article" date="2000" name="EMBO J.">
        <title>A Sm-like protein complex that participates in mRNA degradation.</title>
        <authorList>
            <person name="Bouveret E."/>
            <person name="Rigaut G."/>
            <person name="Shevchenko A."/>
            <person name="Wilm M."/>
            <person name="Seraphin B."/>
        </authorList>
    </citation>
    <scope>IDENTIFICATION IN THE LSM1-LSM7 COMPLEX</scope>
    <scope>ASSOCIATION OF THE LSM1-LSM7 COMPLEX WITH PAT1 AND XRN1</scope>
    <scope>FUNCTION OF THE LSM1-LSM7 COMPLEX</scope>
    <scope>IDENTIFICATION IN THE LSM2-LSM8 COMPLEX</scope>
    <scope>ASSOCIATION OF THE LSM2-LSM8 COMPLEX WITH U6 SNRNA</scope>
    <scope>IDENTIFICATION BY MASS SPECTROMETRY</scope>
</reference>
<reference key="10">
    <citation type="journal article" date="2000" name="Nature">
        <title>Yeast Sm-like proteins function in mRNA decapping and decay.</title>
        <authorList>
            <person name="Tharun S."/>
            <person name="He W."/>
            <person name="Mayes A.E."/>
            <person name="Lennertz P."/>
            <person name="Beggs J.D."/>
            <person name="Parker R."/>
        </authorList>
    </citation>
    <scope>FUNCTION OF THE LSM1-LSM7 COMPLEX</scope>
</reference>
<reference key="11">
    <citation type="journal article" date="2002" name="Mol. Cell. Biol.">
        <title>Lsm proteins are required for normal processing of pre-tRNAs and their efficient association with La-homologous protein Lhp1p.</title>
        <authorList>
            <person name="Kufel J."/>
            <person name="Allmang C."/>
            <person name="Verdone L."/>
            <person name="Beggs J.D."/>
            <person name="Tollervey D."/>
        </authorList>
    </citation>
    <scope>FUNCTION IN PROCESSING OF PRE-TRNAS</scope>
</reference>
<reference key="12">
    <citation type="journal article" date="2003" name="J. Biol. Chem.">
        <title>Lsm Proteins are required for normal processing and stability of ribosomal RNAs.</title>
        <authorList>
            <person name="Kufel J."/>
            <person name="Allmang C."/>
            <person name="Petfalski E."/>
            <person name="Beggs J.D."/>
            <person name="Tollervey D."/>
        </authorList>
    </citation>
    <scope>FUNCTION IN PROCESSING OF PRE-RRNAS</scope>
</reference>
<reference key="13">
    <citation type="journal article" date="2003" name="Nature">
        <title>Global analysis of protein localization in budding yeast.</title>
        <authorList>
            <person name="Huh W.-K."/>
            <person name="Falvo J.V."/>
            <person name="Gerke L.C."/>
            <person name="Carroll A.S."/>
            <person name="Howson R.W."/>
            <person name="Weissman J.S."/>
            <person name="O'Shea E.K."/>
        </authorList>
    </citation>
    <scope>SUBCELLULAR LOCATION [LARGE SCALE ANALYSIS]</scope>
</reference>
<reference key="14">
    <citation type="journal article" date="2003" name="Nature">
        <title>Global analysis of protein expression in yeast.</title>
        <authorList>
            <person name="Ghaemmaghami S."/>
            <person name="Huh W.-K."/>
            <person name="Bower K."/>
            <person name="Howson R.W."/>
            <person name="Belle A."/>
            <person name="Dephoure N."/>
            <person name="O'Shea E.K."/>
            <person name="Weissman J.S."/>
        </authorList>
    </citation>
    <scope>LEVEL OF PROTEIN EXPRESSION [LARGE SCALE ANALYSIS]</scope>
</reference>
<reference key="15">
    <citation type="journal article" date="2004" name="Mol. Biol. Cell">
        <title>An Lsm2-Lsm7 complex in Saccharomyces cerevisiae associates with the small nucleolar RNA snR5.</title>
        <authorList>
            <person name="Fernandez C.F."/>
            <person name="Pannone B.K."/>
            <person name="Chen X."/>
            <person name="Fuchs G."/>
            <person name="Wolin S.L."/>
        </authorList>
    </citation>
    <scope>FUNCTION</scope>
    <scope>IDENTIFICATION IN THE LSM2-LSM7 COMPLEX</scope>
    <scope>SUBCELLULAR LOCATION</scope>
</reference>
<reference key="16">
    <citation type="journal article" date="2004" name="Mol. Cell. Biol.">
        <title>Nuclear pre-mRNA decapping and 5' degradation in yeast require the Lsm2-8p complex.</title>
        <authorList>
            <person name="Kufel J."/>
            <person name="Bousquet-Antonelli C."/>
            <person name="Beggs J.D."/>
            <person name="Tollervey D."/>
        </authorList>
    </citation>
    <scope>FUNCTION OF THE LSM2-LSM8 COMPLEX IN NUCLEAR MRNA DEGRADATION</scope>
</reference>
<reference key="17">
    <citation type="journal article" date="2012" name="Proc. Natl. Acad. Sci. U.S.A.">
        <title>N-terminal acetylome analyses and functional insights of the N-terminal acetyltransferase NatB.</title>
        <authorList>
            <person name="Van Damme P."/>
            <person name="Lasa M."/>
            <person name="Polevoda B."/>
            <person name="Gazquez C."/>
            <person name="Elosegui-Artola A."/>
            <person name="Kim D.S."/>
            <person name="De Juan-Pardo E."/>
            <person name="Demeyer K."/>
            <person name="Hole K."/>
            <person name="Larrea E."/>
            <person name="Timmerman E."/>
            <person name="Prieto J."/>
            <person name="Arnesen T."/>
            <person name="Sherman F."/>
            <person name="Gevaert K."/>
            <person name="Aldabe R."/>
        </authorList>
    </citation>
    <scope>IDENTIFICATION BY MASS SPECTROMETRY [LARGE SCALE ANALYSIS]</scope>
</reference>
<reference key="18">
    <citation type="journal article" date="2018" name="PLoS Genet.">
        <title>The Lsm1-7/Pat1 complex binds to stress-activated mRNAs and modulates the response to hyperosmotic shock.</title>
        <authorList>
            <person name="Garre E."/>
            <person name="Pelechano V."/>
            <person name="Sanchez Del Pino M."/>
            <person name="Alepuz P."/>
            <person name="Sunnerhagen P."/>
        </authorList>
    </citation>
    <scope>FUNCTION</scope>
</reference>
<reference key="19">
    <citation type="journal article" date="2008" name="J. Mol. Biol.">
        <title>Crystal structure of Lsm3 octamer from Saccharomyces cerevisiae: implications for Lsm ring organisation and recruitment.</title>
        <authorList>
            <person name="Naidoo N."/>
            <person name="Harrop S.J."/>
            <person name="Sobti M."/>
            <person name="Haynes P.A."/>
            <person name="Szymczyna B.R."/>
            <person name="Williamson J.R."/>
            <person name="Curmi P.M."/>
            <person name="Mabbutt B.C."/>
        </authorList>
    </citation>
    <scope>X-RAY CRYSTALLOGRAPHY (2.50 ANGSTROMS)</scope>
    <scope>SUBUNIT</scope>
</reference>
<reference key="20">
    <citation type="journal article" date="2013" name="Cell Rep.">
        <title>Architecture of the Lsm1-7-Pat1 complex: a conserved assembly in eukaryotic mRNA turnover.</title>
        <authorList>
            <person name="Sharif H."/>
            <person name="Conti E."/>
        </authorList>
    </citation>
    <scope>X-RAY CRYSTALLOGRAPHY (2.30 ANGSTROMS) OF LSM1-LSM7 COMPLEX</scope>
    <scope>SUBUNIT</scope>
    <scope>INTERACTION WITH PAT1</scope>
</reference>
<reference key="21">
    <citation type="journal article" date="2014" name="Cell Res.">
        <title>Crystal structure and biochemical analysis of the heptameric Lsm1-7 complex.</title>
        <authorList>
            <person name="Zhou L."/>
            <person name="Zhou Y."/>
            <person name="Hang J."/>
            <person name="Wan R."/>
            <person name="Lu G."/>
            <person name="Yan C."/>
            <person name="Shi Y."/>
        </authorList>
    </citation>
    <scope>X-RAY CRYSTALLOGRAPHY (2.95 ANGSTROMS) OF LSM1-LSM7 COMPLEX</scope>
    <scope>SUBUNIT</scope>
    <scope>FUNCTION</scope>
    <scope>RNA-BINDING</scope>
    <scope>MUTAGENESIS OF ARG-69</scope>
</reference>
<reference key="22">
    <citation type="journal article" date="2014" name="Cell Res.">
        <title>Lsm2 and Lsm3 bridge the interaction of the Lsm1-7 complex with Pat1 for decapping activation.</title>
        <authorList>
            <person name="Wu D."/>
            <person name="Muhlrad D."/>
            <person name="Bowler M.W."/>
            <person name="Jiang S."/>
            <person name="Liu Z."/>
            <person name="Parker R."/>
            <person name="Song H."/>
        </authorList>
    </citation>
    <scope>X-RAY CRYSTALLOGRAPHY (3.15 ANGSTROMS)</scope>
    <scope>SUBUNIT</scope>
    <scope>INTERACTION WITH PAT1</scope>
    <scope>FUNCTION</scope>
    <scope>RNA-BINDING</scope>
</reference>
<reference key="23">
    <citation type="journal article" date="2014" name="Nature">
        <title>Crystal structures of the Lsm complex bound to the 3' end sequence of U6 small nuclear RNA.</title>
        <authorList>
            <person name="Zhou L."/>
            <person name="Hang J."/>
            <person name="Zhou Y."/>
            <person name="Wan R."/>
            <person name="Lu G."/>
            <person name="Yin P."/>
            <person name="Yan C."/>
            <person name="Shi Y."/>
        </authorList>
    </citation>
    <scope>X-RAY CRYSTALLOGRAPHY (2.60 ANGSTROMS) OF LSM2-LSM8 COMPLEX</scope>
    <scope>SUBUNIT</scope>
    <scope>FUNCTION</scope>
    <scope>RNA-BINDING</scope>
    <scope>MUTAGENESIS OF HIS-36; ASN-38 AND ARG-69</scope>
</reference>
<reference evidence="22 23" key="24">
    <citation type="journal article" date="2018" name="Nat. Commun.">
        <title>Architecture of the U6 snRNP reveals specific recognition of 3'-end processed U6 snRNA.</title>
        <authorList>
            <person name="Montemayor E.J."/>
            <person name="Didychuk A.L."/>
            <person name="Yake A.D."/>
            <person name="Sidhu G.K."/>
            <person name="Brow D.A."/>
            <person name="Butcher S.E."/>
        </authorList>
    </citation>
    <scope>X-RAY CRYSTALLOGRAPHY (2.71 ANGSTROMS) IN COMPLEX WITH SNR6; LSM2; PRP24; LSM4; LSM5; LSM6; LSM7 AND LSM8</scope>
    <scope>FUNCTION</scope>
    <scope>IDENTIFICATION IN THE U4/U6 SNRNP ASSEMBLY</scope>
    <scope>MUTAGENESIS OF ARG-21</scope>
</reference>
<proteinExistence type="evidence at protein level"/>
<protein>
    <recommendedName>
        <fullName evidence="20">LSM complex subunit LSM3</fullName>
    </recommendedName>
    <alternativeName>
        <fullName>SmX4 protein</fullName>
    </alternativeName>
</protein>
<name>LSM3_YEAST</name>
<comment type="function">
    <text evidence="2 4 5 6 7 10 11 14 15 16 17 18 19">Component of LSm protein complexes, which are involved in RNA processing and may function in a chaperone-like manner (PubMed:10747033, PubMed:12077351, PubMed:12438310, PubMed:24513854, PubMed:24247251). Component of the cytoplasmic LSM1-LSM7 complex which is involved in mRNA degradation by activating the decapping step (PubMed:10747033, PubMed:10761922, PubMed:24513854, PubMed:24247251). Together with PAT1, the LSM1-LSM7 complex binds to osmotic stress-activated mRNAs to attenuate the osmotic stress response, probably by limiting ribosome access to the mRNA and consequently translation (PubMed:30059503). Component of the nuclear LSM2-LSM8 complex, which is involved in spliceosome assembly (PubMed:7744014, PubMed:10747033, PubMed:12077351, PubMed:12438310). The LSM2-LSM8 complex plays a role in the biogenesis of the spliceosomal U4/U6-U5 tri-snRNP complex by accelerating PRP24-mediated annealing of U4/U6 di-snRNA (PubMed:10747033, PubMed:24240276, PubMed:29717126). The LSM2-LSM8 complex binds U6 snRNA terminating with a non-cyclic 3' phosphate group (PubMed:29717126). LSM2-LSM8 is probably also involved in degradation of nuclear pre-mRNA by targeting them for decapping (PubMed:15485930). LSM2-LSM8 could be involved in processing of pre-tRNAs, pre-rRNAs and U3 snoRNA, although involvement may be indirect (PubMed:12077351, PubMed:12438310, PubMed:15075370). In a complex that probably contains LSM2-LSM7, but not LSM1 or LSM8, associates with the precursor of the RNA component of RNase P (pre-P RNA) and may be involved in maturing pre-P RNA; the complex also associates with snoRNA SNR5 (PubMed:10369684, PubMed:15075370).</text>
</comment>
<comment type="subunit">
    <text evidence="2 3 4 10 12 13 14 15 16 17">Component of the heptameric LSM1-LSM7 complex that forms a seven-membered ring structure with a donut shape (PubMed:10747033, PubMed:18329667, PubMed:24139796, PubMed:24513854, PubMed:24247251). The LSm subunits are arranged in the order LSM1, LSM2, LSM3, LSM6, LSM5, LSM7 and LSM4 (PubMed:24139796). Except for LSM1, where a C-terminal helix crosses the ring structure to form additional interactions with LSM3 and LSM6, each subunit interacts only with its two neighboring subunits (PubMed:24139796). The LSM1-LSM7 complex interacts with PAT1; within the complex PAT1 has direct interactions with LSM2 and LSM3 (PubMed:10747033, PubMed:10761922, PubMed:24139796, PubMed:24247251). The LSM1-LSM7 complex interacts with XRN1 (PubMed:10747033). Component of the heptameric LSM2-LSM8 complex that forms a seven-membered ring structure with a donut shape; an RNA strand can pass through the hole in the center of the ring structure (PubMed:10369684, PubMed:10747033, PubMed:18329667, PubMed:24240276, PubMed:29717126). The LSm subunits are arranged in the order LSM8, LSM2, LSM3, LSM6, LSM5, LSM7 and LSM4 (PubMed:24240276). Component of the spliceosome U4/U6-U5 tri-snRNP complex composed of the U4, U6 and U5 snRNAs and at least PRP3, PRP4, PRP6, PRP8, PRP18, PRP31, PRP38, SNU13, SNU23, SNU66, SNU114, SPP381, SMB1, SMD1, SMD2, SMD3, SMX2, SMX3, LSM2, LSM3, LSM4, LSM5, LSM6, LSM7, LSM8, BRR2 and DIB1 (PubMed:10449419, PubMed:24240276). May be found in a complex comprising LSM2-LSM7 without LSM1 or LSM8; the complex associates with pre-P RNA and snoRNA SNR5 (PubMed:10369684, PubMed:15075370).</text>
</comment>
<comment type="interaction">
    <interactant intactId="EBI-10227">
        <id>P57743</id>
    </interactant>
    <interactant intactId="EBI-158">
        <id>P39517</id>
        <label>DHH1</label>
    </interactant>
    <organismsDiffer>false</organismsDiffer>
    <experiments>3</experiments>
</comment>
<comment type="interaction">
    <interactant intactId="EBI-10227">
        <id>P57743</id>
    </interactant>
    <interactant intactId="EBI-174">
        <id>P47017</id>
        <label>LSM1</label>
    </interactant>
    <organismsDiffer>false</organismsDiffer>
    <experiments>5</experiments>
</comment>
<comment type="interaction">
    <interactant intactId="EBI-10227">
        <id>P57743</id>
    </interactant>
    <interactant intactId="EBI-180">
        <id>P38203</id>
        <label>LSM2</label>
    </interactant>
    <organismsDiffer>false</organismsDiffer>
    <experiments>8</experiments>
</comment>
<comment type="interaction">
    <interactant intactId="EBI-10227">
        <id>P57743</id>
    </interactant>
    <interactant intactId="EBI-188">
        <id>P40070</id>
        <label>LSM4</label>
    </interactant>
    <organismsDiffer>false</organismsDiffer>
    <experiments>4</experiments>
</comment>
<comment type="interaction">
    <interactant intactId="EBI-10227">
        <id>P57743</id>
    </interactant>
    <interactant intactId="EBI-10236">
        <id>P40089</id>
        <label>LSM5</label>
    </interactant>
    <organismsDiffer>false</organismsDiffer>
    <experiments>3</experiments>
</comment>
<comment type="interaction">
    <interactant intactId="EBI-10227">
        <id>P57743</id>
    </interactant>
    <interactant intactId="EBI-196">
        <id>Q06406</id>
        <label>LSM6</label>
    </interactant>
    <organismsDiffer>false</organismsDiffer>
    <experiments>3</experiments>
</comment>
<comment type="interaction">
    <interactant intactId="EBI-10227">
        <id>P57743</id>
    </interactant>
    <interactant intactId="EBI-313">
        <id>P47093</id>
        <label>LSM8</label>
    </interactant>
    <organismsDiffer>false</organismsDiffer>
    <experiments>3</experiments>
</comment>
<comment type="interaction">
    <interactant intactId="EBI-10227">
        <id>P57743</id>
    </interactant>
    <interactant intactId="EBI-204">
        <id>P25644</id>
        <label>PAT1</label>
    </interactant>
    <organismsDiffer>false</organismsDiffer>
    <experiments>3</experiments>
</comment>
<comment type="subcellular location">
    <subcellularLocation>
        <location evidence="8">Nucleus</location>
    </subcellularLocation>
    <subcellularLocation>
        <location evidence="21">Nucleus</location>
        <location evidence="21">Nucleolus</location>
    </subcellularLocation>
    <subcellularLocation>
        <location evidence="8">Cytoplasm</location>
    </subcellularLocation>
</comment>
<comment type="miscellaneous">
    <text evidence="9">Present with 7060 molecules/cell in log phase SD medium.</text>
</comment>
<comment type="similarity">
    <text evidence="20">Belongs to the snRNP Sm proteins family.</text>
</comment>
<sequence>METPLDLLKLNLDERVYIKLRGARTLVGTLQAFDSHCNIVLSDAVETIYQLNNEELSESERRCEMVFIRGDTVTLISTPSEDDDGAVEI</sequence>
<organism>
    <name type="scientific">Saccharomyces cerevisiae (strain ATCC 204508 / S288c)</name>
    <name type="common">Baker's yeast</name>
    <dbReference type="NCBI Taxonomy" id="559292"/>
    <lineage>
        <taxon>Eukaryota</taxon>
        <taxon>Fungi</taxon>
        <taxon>Dikarya</taxon>
        <taxon>Ascomycota</taxon>
        <taxon>Saccharomycotina</taxon>
        <taxon>Saccharomycetes</taxon>
        <taxon>Saccharomycetales</taxon>
        <taxon>Saccharomycetaceae</taxon>
        <taxon>Saccharomyces</taxon>
    </lineage>
</organism>